<proteinExistence type="inferred from homology"/>
<accession>D4GU68</accession>
<gene>
    <name type="primary">agl15</name>
    <name type="ordered locus">HVO_2055</name>
    <name type="ORF">C498_05558</name>
</gene>
<evidence type="ECO:0000255" key="1"/>
<evidence type="ECO:0000269" key="2">
    <source>
    </source>
</evidence>
<evidence type="ECO:0000305" key="3"/>
<feature type="chain" id="PRO_0000428766" description="Probable low-salt glycan biosynthesis flippase Agl15">
    <location>
        <begin position="1"/>
        <end position="472"/>
    </location>
</feature>
<feature type="transmembrane region" description="Helical" evidence="1">
    <location>
        <begin position="8"/>
        <end position="28"/>
    </location>
</feature>
<feature type="transmembrane region" description="Helical" evidence="1">
    <location>
        <begin position="38"/>
        <end position="58"/>
    </location>
</feature>
<feature type="transmembrane region" description="Helical" evidence="1">
    <location>
        <begin position="77"/>
        <end position="97"/>
    </location>
</feature>
<feature type="transmembrane region" description="Helical" evidence="1">
    <location>
        <begin position="109"/>
        <end position="129"/>
    </location>
</feature>
<feature type="transmembrane region" description="Helical" evidence="1">
    <location>
        <begin position="164"/>
        <end position="184"/>
    </location>
</feature>
<feature type="transmembrane region" description="Helical" evidence="1">
    <location>
        <begin position="209"/>
        <end position="229"/>
    </location>
</feature>
<feature type="transmembrane region" description="Helical" evidence="1">
    <location>
        <begin position="244"/>
        <end position="264"/>
    </location>
</feature>
<feature type="transmembrane region" description="Helical" evidence="1">
    <location>
        <begin position="289"/>
        <end position="309"/>
    </location>
</feature>
<feature type="transmembrane region" description="Helical" evidence="1">
    <location>
        <begin position="315"/>
        <end position="335"/>
    </location>
</feature>
<feature type="transmembrane region" description="Helical" evidence="1">
    <location>
        <begin position="354"/>
        <end position="374"/>
    </location>
</feature>
<feature type="transmembrane region" description="Helical" evidence="1">
    <location>
        <begin position="375"/>
        <end position="395"/>
    </location>
</feature>
<feature type="transmembrane region" description="Helical" evidence="1">
    <location>
        <begin position="408"/>
        <end position="428"/>
    </location>
</feature>
<feature type="transmembrane region" description="Helical" evidence="1">
    <location>
        <begin position="434"/>
        <end position="454"/>
    </location>
</feature>
<reference key="1">
    <citation type="journal article" date="2010" name="PLoS ONE">
        <title>The complete genome sequence of Haloferax volcanii DS2, a model archaeon.</title>
        <authorList>
            <person name="Hartman A.L."/>
            <person name="Norais C."/>
            <person name="Badger J.H."/>
            <person name="Delmas S."/>
            <person name="Haldenby S."/>
            <person name="Madupu R."/>
            <person name="Robinson J."/>
            <person name="Khouri H."/>
            <person name="Ren Q."/>
            <person name="Lowe T.M."/>
            <person name="Maupin-Furlow J."/>
            <person name="Pohlschroder M."/>
            <person name="Daniels C."/>
            <person name="Pfeiffer F."/>
            <person name="Allers T."/>
            <person name="Eisen J.A."/>
        </authorList>
    </citation>
    <scope>NUCLEOTIDE SEQUENCE [LARGE SCALE GENOMIC DNA]</scope>
    <source>
        <strain>ATCC 29605 / DSM 3757 / JCM 8879 / NBRC 14742 / NCIMB 2012 / VKM B-1768 / DS2</strain>
    </source>
</reference>
<reference key="2">
    <citation type="journal article" date="2014" name="PLoS Genet.">
        <title>Phylogenetically driven sequencing of extremely halophilic archaea reveals strategies for static and dynamic osmo-response.</title>
        <authorList>
            <person name="Becker E.A."/>
            <person name="Seitzer P.M."/>
            <person name="Tritt A."/>
            <person name="Larsen D."/>
            <person name="Krusor M."/>
            <person name="Yao A.I."/>
            <person name="Wu D."/>
            <person name="Madern D."/>
            <person name="Eisen J.A."/>
            <person name="Darling A.E."/>
            <person name="Facciotti M.T."/>
        </authorList>
    </citation>
    <scope>NUCLEOTIDE SEQUENCE [LARGE SCALE GENOMIC DNA]</scope>
    <source>
        <strain>ATCC 29605 / DSM 3757 / JCM 8879 / NBRC 14742 / NCIMB 2012 / VKM B-1768 / DS2</strain>
    </source>
</reference>
<reference key="3">
    <citation type="journal article" date="2013" name="MBio">
        <title>Two distinct N-glycosylation pathways process the Haloferax volcanii S-layer glycoprotein upon changes in environmental salinity.</title>
        <authorList>
            <person name="Kaminski L."/>
            <person name="Guan Z."/>
            <person name="Yurist-Doutsch S."/>
            <person name="Eichler J."/>
        </authorList>
    </citation>
    <scope>FUNCTION</scope>
    <scope>PATHWAY</scope>
    <scope>DISRUPTION PHENOTYPE</scope>
    <source>
        <strain>ATCC 29605 / DSM 3757 / JCM 8879 / NBRC 14742 / NCIMB 2012 / VKM B-1768 / DS2</strain>
    </source>
</reference>
<sequence>MDLARSSIKLFIANIFGAGLQFLGITFFARELGASQMGVFFLFQALLGIVAIPADFGLRGAVEKRISEGIQPGEYLSSAIILKLIPISLIILSIVVFEQRINGYLGGDFAVYLALAIILQETAQLAVSVLKGELRVGETAELNIIRRITWVGGGFLLVSSGLDAEALIYSLLAGMVVTLAWGLSKISTSLKKPSFKNARSLFNYSKYSVVSSIGGYFYSWMDVAIIGIFLTQSHVGAYETAWRVTAITMLFSQAVASTIFPQVSQWSSKNEQQQIESVISNSITPSMLLVIPAFFGILVFSDEIMGIVFGSEFTIASYVLIILAGEKILQSVHVIIGRSLQALNQPGLAARATVISVVLNLILNVILILSFGIVGAAVATALSFAVNTVLHAHYLSSFVSIKFQYSQIGWCTVSSLIMAGVLFGFKTLVGVNSLIQLFIGIFFGMLVYTTITLLYQPIRETAFKNLIRLVPI</sequence>
<keyword id="KW-1003">Cell membrane</keyword>
<keyword id="KW-0472">Membrane</keyword>
<keyword id="KW-1185">Reference proteome</keyword>
<keyword id="KW-0812">Transmembrane</keyword>
<keyword id="KW-1133">Transmembrane helix</keyword>
<organism>
    <name type="scientific">Haloferax volcanii (strain ATCC 29605 / DSM 3757 / JCM 8879 / NBRC 14742 / NCIMB 2012 / VKM B-1768 / DS2)</name>
    <name type="common">Halobacterium volcanii</name>
    <dbReference type="NCBI Taxonomy" id="309800"/>
    <lineage>
        <taxon>Archaea</taxon>
        <taxon>Methanobacteriati</taxon>
        <taxon>Methanobacteriota</taxon>
        <taxon>Stenosarchaea group</taxon>
        <taxon>Halobacteria</taxon>
        <taxon>Halobacteriales</taxon>
        <taxon>Haloferacaceae</taxon>
        <taxon>Haloferax</taxon>
    </lineage>
</organism>
<protein>
    <recommendedName>
        <fullName>Probable low-salt glycan biosynthesis flippase Agl15</fullName>
    </recommendedName>
</protein>
<comment type="function">
    <text evidence="2">Flippase involved in N-glycan biosynthetic pathway that takes place under low-salt conditions (1.75 M instead of 3.4 M). Participates in the formation of the tetrasaccharide present at 'Asn-532' of S-layer glycoprotein Csg, consisting of a sulfated hexose, 2 hexoses and rhamnose. Probably moves the tetrasaccharide from the cytosolic to the extracytosolic side of the membrane.</text>
</comment>
<comment type="pathway">
    <text evidence="2">Protein modification; protein glycosylation.</text>
</comment>
<comment type="pathway">
    <text evidence="2">Cell surface structure biogenesis; S-layer biogenesis.</text>
</comment>
<comment type="subcellular location">
    <subcellularLocation>
        <location evidence="3">Cell membrane</location>
        <topology evidence="3">Multi-pass membrane protein</topology>
    </subcellularLocation>
</comment>
<comment type="disruption phenotype">
    <text evidence="2">Impaired formation of the tetrasaccharide present at 'Asn-532' of S-layer glycoprotein Csg. The complete tetrasaccharide is formed but does not make it to the S-layer glycoprotein Csg. No effect on 'Asn-47' and 'Asn-117' glycosylation of S-layer glycoprotein Csg.</text>
</comment>
<comment type="similarity">
    <text evidence="3">Belongs to the AglR/Agl15 family.</text>
</comment>
<dbReference type="EMBL" id="CP001956">
    <property type="protein sequence ID" value="ADE05104.1"/>
    <property type="molecule type" value="Genomic_DNA"/>
</dbReference>
<dbReference type="EMBL" id="AOHU01000040">
    <property type="protein sequence ID" value="ELY33648.1"/>
    <property type="molecule type" value="Genomic_DNA"/>
</dbReference>
<dbReference type="RefSeq" id="WP_004041939.1">
    <property type="nucleotide sequence ID" value="NC_013967.1"/>
</dbReference>
<dbReference type="SMR" id="D4GU68"/>
<dbReference type="STRING" id="309800.HVO_2055"/>
<dbReference type="PaxDb" id="309800-C498_05558"/>
<dbReference type="EnsemblBacteria" id="ADE05104">
    <property type="protein sequence ID" value="ADE05104"/>
    <property type="gene ID" value="HVO_2055"/>
</dbReference>
<dbReference type="GeneID" id="31787488"/>
<dbReference type="KEGG" id="hvo:HVO_2055"/>
<dbReference type="PATRIC" id="fig|309800.29.peg.1078"/>
<dbReference type="eggNOG" id="arCOG02209">
    <property type="taxonomic scope" value="Archaea"/>
</dbReference>
<dbReference type="HOGENOM" id="CLU_043240_0_0_2"/>
<dbReference type="OrthoDB" id="112053at2157"/>
<dbReference type="UniPathway" id="UPA00378"/>
<dbReference type="UniPathway" id="UPA00977"/>
<dbReference type="Proteomes" id="UP000008243">
    <property type="component" value="Chromosome"/>
</dbReference>
<dbReference type="Proteomes" id="UP000011532">
    <property type="component" value="Unassembled WGS sequence"/>
</dbReference>
<dbReference type="GO" id="GO:0005886">
    <property type="term" value="C:plasma membrane"/>
    <property type="evidence" value="ECO:0007669"/>
    <property type="project" value="UniProtKB-SubCell"/>
</dbReference>
<dbReference type="GO" id="GO:0006486">
    <property type="term" value="P:protein glycosylation"/>
    <property type="evidence" value="ECO:0007669"/>
    <property type="project" value="UniProtKB-UniPathway"/>
</dbReference>
<dbReference type="GO" id="GO:0045232">
    <property type="term" value="P:S-layer organization"/>
    <property type="evidence" value="ECO:0007669"/>
    <property type="project" value="UniProtKB-UniPathway"/>
</dbReference>
<dbReference type="CDD" id="cd13128">
    <property type="entry name" value="MATE_Wzx_like"/>
    <property type="match status" value="1"/>
</dbReference>
<dbReference type="InterPro" id="IPR050833">
    <property type="entry name" value="Poly_Biosynth_Transport"/>
</dbReference>
<dbReference type="PANTHER" id="PTHR30250:SF11">
    <property type="entry name" value="O-ANTIGEN TRANSPORTER-RELATED"/>
    <property type="match status" value="1"/>
</dbReference>
<dbReference type="PANTHER" id="PTHR30250">
    <property type="entry name" value="PST FAMILY PREDICTED COLANIC ACID TRANSPORTER"/>
    <property type="match status" value="1"/>
</dbReference>
<dbReference type="Pfam" id="PF13440">
    <property type="entry name" value="Polysacc_synt_3"/>
    <property type="match status" value="1"/>
</dbReference>
<name>AGL15_HALVD</name>